<feature type="chain" id="PRO_1000003761" description="Nucleoid-associated protein LPC_3038">
    <location>
        <begin position="1"/>
        <end position="112"/>
    </location>
</feature>
<name>Y3038_LEGPC</name>
<proteinExistence type="inferred from homology"/>
<protein>
    <recommendedName>
        <fullName evidence="1">Nucleoid-associated protein LPC_3038</fullName>
    </recommendedName>
</protein>
<organism>
    <name type="scientific">Legionella pneumophila (strain Corby)</name>
    <dbReference type="NCBI Taxonomy" id="400673"/>
    <lineage>
        <taxon>Bacteria</taxon>
        <taxon>Pseudomonadati</taxon>
        <taxon>Pseudomonadota</taxon>
        <taxon>Gammaproteobacteria</taxon>
        <taxon>Legionellales</taxon>
        <taxon>Legionellaceae</taxon>
        <taxon>Legionella</taxon>
    </lineage>
</organism>
<dbReference type="EMBL" id="CP000675">
    <property type="protein sequence ID" value="ABQ56929.1"/>
    <property type="molecule type" value="Genomic_DNA"/>
</dbReference>
<dbReference type="RefSeq" id="WP_011216606.1">
    <property type="nucleotide sequence ID" value="NZ_JAPMSS010000004.1"/>
</dbReference>
<dbReference type="SMR" id="A5IHS9"/>
<dbReference type="KEGG" id="lpc:LPC_3038"/>
<dbReference type="HOGENOM" id="CLU_140930_0_0_6"/>
<dbReference type="GO" id="GO:0043590">
    <property type="term" value="C:bacterial nucleoid"/>
    <property type="evidence" value="ECO:0007669"/>
    <property type="project" value="UniProtKB-UniRule"/>
</dbReference>
<dbReference type="GO" id="GO:0005829">
    <property type="term" value="C:cytosol"/>
    <property type="evidence" value="ECO:0007669"/>
    <property type="project" value="TreeGrafter"/>
</dbReference>
<dbReference type="GO" id="GO:0003677">
    <property type="term" value="F:DNA binding"/>
    <property type="evidence" value="ECO:0007669"/>
    <property type="project" value="UniProtKB-UniRule"/>
</dbReference>
<dbReference type="Gene3D" id="3.30.1310.10">
    <property type="entry name" value="Nucleoid-associated protein YbaB-like domain"/>
    <property type="match status" value="1"/>
</dbReference>
<dbReference type="HAMAP" id="MF_00274">
    <property type="entry name" value="DNA_YbaB_EbfC"/>
    <property type="match status" value="1"/>
</dbReference>
<dbReference type="InterPro" id="IPR036894">
    <property type="entry name" value="YbaB-like_sf"/>
</dbReference>
<dbReference type="InterPro" id="IPR004401">
    <property type="entry name" value="YbaB/EbfC"/>
</dbReference>
<dbReference type="NCBIfam" id="TIGR00103">
    <property type="entry name" value="DNA_YbaB_EbfC"/>
    <property type="match status" value="1"/>
</dbReference>
<dbReference type="PANTHER" id="PTHR33449">
    <property type="entry name" value="NUCLEOID-ASSOCIATED PROTEIN YBAB"/>
    <property type="match status" value="1"/>
</dbReference>
<dbReference type="PANTHER" id="PTHR33449:SF1">
    <property type="entry name" value="NUCLEOID-ASSOCIATED PROTEIN YBAB"/>
    <property type="match status" value="1"/>
</dbReference>
<dbReference type="Pfam" id="PF02575">
    <property type="entry name" value="YbaB_DNA_bd"/>
    <property type="match status" value="1"/>
</dbReference>
<dbReference type="PIRSF" id="PIRSF004555">
    <property type="entry name" value="UCP004555"/>
    <property type="match status" value="1"/>
</dbReference>
<dbReference type="SUPFAM" id="SSF82607">
    <property type="entry name" value="YbaB-like"/>
    <property type="match status" value="1"/>
</dbReference>
<keyword id="KW-0963">Cytoplasm</keyword>
<keyword id="KW-0238">DNA-binding</keyword>
<accession>A5IHS9</accession>
<sequence>MDINQNLGNLMKEAQKMQQRMQEAQQQLSQLVVSGESGGGMVTIKMNGRHDVTEVKIKPTLMDEDIEMLEDLIAAAVNDAVRKIEKASKEKISQLTAGLNIPTDLMGGKEGE</sequence>
<reference key="1">
    <citation type="submission" date="2006-11" db="EMBL/GenBank/DDBJ databases">
        <title>Identification and characterization of a new conjugation/ type IVA secretion system (trb/tra) of L. pneumophila Corby localized on a mobile genomic island.</title>
        <authorList>
            <person name="Gloeckner G."/>
            <person name="Albert-Weissenberger C."/>
            <person name="Weinmann E."/>
            <person name="Jacobi S."/>
            <person name="Schunder E."/>
            <person name="Steinert M."/>
            <person name="Buchrieser C."/>
            <person name="Hacker J."/>
            <person name="Heuner K."/>
        </authorList>
    </citation>
    <scope>NUCLEOTIDE SEQUENCE [LARGE SCALE GENOMIC DNA]</scope>
    <source>
        <strain>Corby</strain>
    </source>
</reference>
<gene>
    <name type="ordered locus">LPC_3038</name>
</gene>
<comment type="function">
    <text evidence="1">Binds to DNA and alters its conformation. May be involved in regulation of gene expression, nucleoid organization and DNA protection.</text>
</comment>
<comment type="subunit">
    <text evidence="1">Homodimer.</text>
</comment>
<comment type="subcellular location">
    <subcellularLocation>
        <location evidence="1">Cytoplasm</location>
        <location evidence="1">Nucleoid</location>
    </subcellularLocation>
</comment>
<comment type="similarity">
    <text evidence="1">Belongs to the YbaB/EbfC family.</text>
</comment>
<evidence type="ECO:0000255" key="1">
    <source>
        <dbReference type="HAMAP-Rule" id="MF_00274"/>
    </source>
</evidence>